<reference key="1">
    <citation type="journal article" date="2007" name="J. Exp. Zool. B Mol. Dev. Evol.">
        <title>Venomous auger snail Hastula (Impages) hectica (Linnaeus, 1758): molecular phylogeny, foregut anatomy and comparative toxinology.</title>
        <authorList>
            <person name="Imperial J.S."/>
            <person name="Kantor Y."/>
            <person name="Watkins M."/>
            <person name="Heralde F.M. III"/>
            <person name="Stevenson B."/>
            <person name="Chen P."/>
            <person name="Hansson K."/>
            <person name="Stenflo J."/>
            <person name="Ownby J.P."/>
            <person name="Bouchet P."/>
            <person name="Olivera B.M."/>
        </authorList>
    </citation>
    <scope>PROTEIN SEQUENCE</scope>
    <source>
        <tissue>Venom</tissue>
    </source>
</reference>
<accession>P0CI06</accession>
<feature type="peptide" id="PRO_0000402138" description="Augerpeptide hhe1a">
    <location>
        <begin position="1"/>
        <end position="16"/>
    </location>
</feature>
<dbReference type="GO" id="GO:0005576">
    <property type="term" value="C:extracellular region"/>
    <property type="evidence" value="ECO:0007669"/>
    <property type="project" value="UniProtKB-SubCell"/>
</dbReference>
<dbReference type="GO" id="GO:0090729">
    <property type="term" value="F:toxin activity"/>
    <property type="evidence" value="ECO:0007669"/>
    <property type="project" value="UniProtKB-KW"/>
</dbReference>
<sequence>GECCTDCAQTAAANYC</sequence>
<protein>
    <recommendedName>
        <fullName>Augerpeptide hhe1a</fullName>
    </recommendedName>
</protein>
<evidence type="ECO:0000250" key="1"/>
<proteinExistence type="evidence at protein level"/>
<name>TEIA_HASHE</name>
<keyword id="KW-0903">Direct protein sequencing</keyword>
<keyword id="KW-1015">Disulfide bond</keyword>
<keyword id="KW-0964">Secreted</keyword>
<keyword id="KW-0800">Toxin</keyword>
<comment type="subcellular location">
    <subcellularLocation>
        <location>Secreted</location>
    </subcellularLocation>
</comment>
<comment type="tissue specificity">
    <text>Expressed by the venom duct.</text>
</comment>
<comment type="domain">
    <text>The cysteine framework is I (CC-C-C). Alpha2/8 pattern.</text>
</comment>
<comment type="PTM">
    <text evidence="1">Contains 2 disulfide bonds.</text>
</comment>
<organism>
    <name type="scientific">Hastula hectica</name>
    <name type="common">Sea snail</name>
    <name type="synonym">Impages hectica</name>
    <dbReference type="NCBI Taxonomy" id="745793"/>
    <lineage>
        <taxon>Eukaryota</taxon>
        <taxon>Metazoa</taxon>
        <taxon>Spiralia</taxon>
        <taxon>Lophotrochozoa</taxon>
        <taxon>Mollusca</taxon>
        <taxon>Gastropoda</taxon>
        <taxon>Caenogastropoda</taxon>
        <taxon>Neogastropoda</taxon>
        <taxon>Conoidea</taxon>
        <taxon>Terebridae</taxon>
        <taxon>Hastula</taxon>
    </lineage>
</organism>